<name>BORA_HUMAN</name>
<comment type="function">
    <text evidence="3">Required for the activation of AURKA at the onset of mitosis.</text>
</comment>
<comment type="subunit">
    <text evidence="3">Interacts with AURKA.</text>
</comment>
<comment type="interaction">
    <interactant intactId="EBI-719836">
        <id>Q6PGQ7</id>
    </interactant>
    <interactant intactId="EBI-448680">
        <id>O14965</id>
        <label>AURKA</label>
    </interactant>
    <organismsDiffer>false</organismsDiffer>
    <experiments>3</experiments>
</comment>
<comment type="interaction">
    <interactant intactId="EBI-719836">
        <id>Q6PGQ7</id>
    </interactant>
    <interactant intactId="EBI-476768">
        <id>P53350</id>
        <label>PLK1</label>
    </interactant>
    <organismsDiffer>false</organismsDiffer>
    <experiments>9</experiments>
</comment>
<comment type="alternative products">
    <event type="alternative splicing"/>
    <isoform>
        <id>Q6PGQ7-1</id>
        <name>1</name>
        <sequence type="displayed"/>
    </isoform>
    <isoform>
        <id>Q6PGQ7-2</id>
        <name>2</name>
        <sequence type="described" ref="VSP_055543"/>
    </isoform>
</comment>
<comment type="PTM">
    <text evidence="3">Phosphorylated by AURKA.</text>
</comment>
<comment type="similarity">
    <text evidence="5">Belongs to the BORA family.</text>
</comment>
<comment type="sequence caution" evidence="5">
    <conflict type="erroneous initiation">
        <sequence resource="EMBL-CDS" id="BAB15426"/>
    </conflict>
    <text>Truncated N-terminus.</text>
</comment>
<protein>
    <recommendedName>
        <fullName>Protein aurora borealis</fullName>
        <shortName>HsBora</shortName>
    </recommendedName>
</protein>
<gene>
    <name type="primary">BORA</name>
    <name type="synonym">C13orf34</name>
</gene>
<organism>
    <name type="scientific">Homo sapiens</name>
    <name type="common">Human</name>
    <dbReference type="NCBI Taxonomy" id="9606"/>
    <lineage>
        <taxon>Eukaryota</taxon>
        <taxon>Metazoa</taxon>
        <taxon>Chordata</taxon>
        <taxon>Craniata</taxon>
        <taxon>Vertebrata</taxon>
        <taxon>Euteleostomi</taxon>
        <taxon>Mammalia</taxon>
        <taxon>Eutheria</taxon>
        <taxon>Euarchontoglires</taxon>
        <taxon>Primates</taxon>
        <taxon>Haplorrhini</taxon>
        <taxon>Catarrhini</taxon>
        <taxon>Hominidae</taxon>
        <taxon>Homo</taxon>
    </lineage>
</organism>
<reference key="1">
    <citation type="journal article" date="2004" name="Nat. Genet.">
        <title>Complete sequencing and characterization of 21,243 full-length human cDNAs.</title>
        <authorList>
            <person name="Ota T."/>
            <person name="Suzuki Y."/>
            <person name="Nishikawa T."/>
            <person name="Otsuki T."/>
            <person name="Sugiyama T."/>
            <person name="Irie R."/>
            <person name="Wakamatsu A."/>
            <person name="Hayashi K."/>
            <person name="Sato H."/>
            <person name="Nagai K."/>
            <person name="Kimura K."/>
            <person name="Makita H."/>
            <person name="Sekine M."/>
            <person name="Obayashi M."/>
            <person name="Nishi T."/>
            <person name="Shibahara T."/>
            <person name="Tanaka T."/>
            <person name="Ishii S."/>
            <person name="Yamamoto J."/>
            <person name="Saito K."/>
            <person name="Kawai Y."/>
            <person name="Isono Y."/>
            <person name="Nakamura Y."/>
            <person name="Nagahari K."/>
            <person name="Murakami K."/>
            <person name="Yasuda T."/>
            <person name="Iwayanagi T."/>
            <person name="Wagatsuma M."/>
            <person name="Shiratori A."/>
            <person name="Sudo H."/>
            <person name="Hosoiri T."/>
            <person name="Kaku Y."/>
            <person name="Kodaira H."/>
            <person name="Kondo H."/>
            <person name="Sugawara M."/>
            <person name="Takahashi M."/>
            <person name="Kanda K."/>
            <person name="Yokoi T."/>
            <person name="Furuya T."/>
            <person name="Kikkawa E."/>
            <person name="Omura Y."/>
            <person name="Abe K."/>
            <person name="Kamihara K."/>
            <person name="Katsuta N."/>
            <person name="Sato K."/>
            <person name="Tanikawa M."/>
            <person name="Yamazaki M."/>
            <person name="Ninomiya K."/>
            <person name="Ishibashi T."/>
            <person name="Yamashita H."/>
            <person name="Murakawa K."/>
            <person name="Fujimori K."/>
            <person name="Tanai H."/>
            <person name="Kimata M."/>
            <person name="Watanabe M."/>
            <person name="Hiraoka S."/>
            <person name="Chiba Y."/>
            <person name="Ishida S."/>
            <person name="Ono Y."/>
            <person name="Takiguchi S."/>
            <person name="Watanabe S."/>
            <person name="Yosida M."/>
            <person name="Hotuta T."/>
            <person name="Kusano J."/>
            <person name="Kanehori K."/>
            <person name="Takahashi-Fujii A."/>
            <person name="Hara H."/>
            <person name="Tanase T.-O."/>
            <person name="Nomura Y."/>
            <person name="Togiya S."/>
            <person name="Komai F."/>
            <person name="Hara R."/>
            <person name="Takeuchi K."/>
            <person name="Arita M."/>
            <person name="Imose N."/>
            <person name="Musashino K."/>
            <person name="Yuuki H."/>
            <person name="Oshima A."/>
            <person name="Sasaki N."/>
            <person name="Aotsuka S."/>
            <person name="Yoshikawa Y."/>
            <person name="Matsunawa H."/>
            <person name="Ichihara T."/>
            <person name="Shiohata N."/>
            <person name="Sano S."/>
            <person name="Moriya S."/>
            <person name="Momiyama H."/>
            <person name="Satoh N."/>
            <person name="Takami S."/>
            <person name="Terashima Y."/>
            <person name="Suzuki O."/>
            <person name="Nakagawa S."/>
            <person name="Senoh A."/>
            <person name="Mizoguchi H."/>
            <person name="Goto Y."/>
            <person name="Shimizu F."/>
            <person name="Wakebe H."/>
            <person name="Hishigaki H."/>
            <person name="Watanabe T."/>
            <person name="Sugiyama A."/>
            <person name="Takemoto M."/>
            <person name="Kawakami B."/>
            <person name="Yamazaki M."/>
            <person name="Watanabe K."/>
            <person name="Kumagai A."/>
            <person name="Itakura S."/>
            <person name="Fukuzumi Y."/>
            <person name="Fujimori Y."/>
            <person name="Komiyama M."/>
            <person name="Tashiro H."/>
            <person name="Tanigami A."/>
            <person name="Fujiwara T."/>
            <person name="Ono T."/>
            <person name="Yamada K."/>
            <person name="Fujii Y."/>
            <person name="Ozaki K."/>
            <person name="Hirao M."/>
            <person name="Ohmori Y."/>
            <person name="Kawabata A."/>
            <person name="Hikiji T."/>
            <person name="Kobatake N."/>
            <person name="Inagaki H."/>
            <person name="Ikema Y."/>
            <person name="Okamoto S."/>
            <person name="Okitani R."/>
            <person name="Kawakami T."/>
            <person name="Noguchi S."/>
            <person name="Itoh T."/>
            <person name="Shigeta K."/>
            <person name="Senba T."/>
            <person name="Matsumura K."/>
            <person name="Nakajima Y."/>
            <person name="Mizuno T."/>
            <person name="Morinaga M."/>
            <person name="Sasaki M."/>
            <person name="Togashi T."/>
            <person name="Oyama M."/>
            <person name="Hata H."/>
            <person name="Watanabe M."/>
            <person name="Komatsu T."/>
            <person name="Mizushima-Sugano J."/>
            <person name="Satoh T."/>
            <person name="Shirai Y."/>
            <person name="Takahashi Y."/>
            <person name="Nakagawa K."/>
            <person name="Okumura K."/>
            <person name="Nagase T."/>
            <person name="Nomura N."/>
            <person name="Kikuchi H."/>
            <person name="Masuho Y."/>
            <person name="Yamashita R."/>
            <person name="Nakai K."/>
            <person name="Yada T."/>
            <person name="Nakamura Y."/>
            <person name="Ohara O."/>
            <person name="Isogai T."/>
            <person name="Sugano S."/>
        </authorList>
    </citation>
    <scope>NUCLEOTIDE SEQUENCE [LARGE SCALE MRNA] (ISOFORM 2)</scope>
    <scope>NUCLEOTIDE SEQUENCE [LARGE SCALE MRNA] OF 135-559 (ISOFORM 1)</scope>
    <source>
        <tissue>Small intestine</tissue>
    </source>
</reference>
<reference key="2">
    <citation type="journal article" date="2004" name="Nature">
        <title>The DNA sequence and analysis of human chromosome 13.</title>
        <authorList>
            <person name="Dunham A."/>
            <person name="Matthews L.H."/>
            <person name="Burton J."/>
            <person name="Ashurst J.L."/>
            <person name="Howe K.L."/>
            <person name="Ashcroft K.J."/>
            <person name="Beare D.M."/>
            <person name="Burford D.C."/>
            <person name="Hunt S.E."/>
            <person name="Griffiths-Jones S."/>
            <person name="Jones M.C."/>
            <person name="Keenan S.J."/>
            <person name="Oliver K."/>
            <person name="Scott C.E."/>
            <person name="Ainscough R."/>
            <person name="Almeida J.P."/>
            <person name="Ambrose K.D."/>
            <person name="Andrews D.T."/>
            <person name="Ashwell R.I.S."/>
            <person name="Babbage A.K."/>
            <person name="Bagguley C.L."/>
            <person name="Bailey J."/>
            <person name="Bannerjee R."/>
            <person name="Barlow K.F."/>
            <person name="Bates K."/>
            <person name="Beasley H."/>
            <person name="Bird C.P."/>
            <person name="Bray-Allen S."/>
            <person name="Brown A.J."/>
            <person name="Brown J.Y."/>
            <person name="Burrill W."/>
            <person name="Carder C."/>
            <person name="Carter N.P."/>
            <person name="Chapman J.C."/>
            <person name="Clamp M.E."/>
            <person name="Clark S.Y."/>
            <person name="Clarke G."/>
            <person name="Clee C.M."/>
            <person name="Clegg S.C."/>
            <person name="Cobley V."/>
            <person name="Collins J.E."/>
            <person name="Corby N."/>
            <person name="Coville G.J."/>
            <person name="Deloukas P."/>
            <person name="Dhami P."/>
            <person name="Dunham I."/>
            <person name="Dunn M."/>
            <person name="Earthrowl M.E."/>
            <person name="Ellington A.G."/>
            <person name="Faulkner L."/>
            <person name="Frankish A.G."/>
            <person name="Frankland J."/>
            <person name="French L."/>
            <person name="Garner P."/>
            <person name="Garnett J."/>
            <person name="Gilbert J.G.R."/>
            <person name="Gilson C.J."/>
            <person name="Ghori J."/>
            <person name="Grafham D.V."/>
            <person name="Gribble S.M."/>
            <person name="Griffiths C."/>
            <person name="Hall R.E."/>
            <person name="Hammond S."/>
            <person name="Harley J.L."/>
            <person name="Hart E.A."/>
            <person name="Heath P.D."/>
            <person name="Howden P.J."/>
            <person name="Huckle E.J."/>
            <person name="Hunt P.J."/>
            <person name="Hunt A.R."/>
            <person name="Johnson C."/>
            <person name="Johnson D."/>
            <person name="Kay M."/>
            <person name="Kimberley A.M."/>
            <person name="King A."/>
            <person name="Laird G.K."/>
            <person name="Langford C.J."/>
            <person name="Lawlor S."/>
            <person name="Leongamornlert D.A."/>
            <person name="Lloyd D.M."/>
            <person name="Lloyd C."/>
            <person name="Loveland J.E."/>
            <person name="Lovell J."/>
            <person name="Martin S."/>
            <person name="Mashreghi-Mohammadi M."/>
            <person name="McLaren S.J."/>
            <person name="McMurray A."/>
            <person name="Milne S."/>
            <person name="Moore M.J.F."/>
            <person name="Nickerson T."/>
            <person name="Palmer S.A."/>
            <person name="Pearce A.V."/>
            <person name="Peck A.I."/>
            <person name="Pelan S."/>
            <person name="Phillimore B."/>
            <person name="Porter K.M."/>
            <person name="Rice C.M."/>
            <person name="Searle S."/>
            <person name="Sehra H.K."/>
            <person name="Shownkeen R."/>
            <person name="Skuce C.D."/>
            <person name="Smith M."/>
            <person name="Steward C.A."/>
            <person name="Sycamore N."/>
            <person name="Tester J."/>
            <person name="Thomas D.W."/>
            <person name="Tracey A."/>
            <person name="Tromans A."/>
            <person name="Tubby B."/>
            <person name="Wall M."/>
            <person name="Wallis J.M."/>
            <person name="West A.P."/>
            <person name="Whitehead S.L."/>
            <person name="Willey D.L."/>
            <person name="Wilming L."/>
            <person name="Wray P.W."/>
            <person name="Wright M.W."/>
            <person name="Young L."/>
            <person name="Coulson A."/>
            <person name="Durbin R.M."/>
            <person name="Hubbard T."/>
            <person name="Sulston J.E."/>
            <person name="Beck S."/>
            <person name="Bentley D.R."/>
            <person name="Rogers J."/>
            <person name="Ross M.T."/>
        </authorList>
    </citation>
    <scope>NUCLEOTIDE SEQUENCE [LARGE SCALE GENOMIC DNA]</scope>
</reference>
<reference key="3">
    <citation type="submission" date="2005-07" db="EMBL/GenBank/DDBJ databases">
        <authorList>
            <person name="Mural R.J."/>
            <person name="Istrail S."/>
            <person name="Sutton G."/>
            <person name="Florea L."/>
            <person name="Halpern A.L."/>
            <person name="Mobarry C.M."/>
            <person name="Lippert R."/>
            <person name="Walenz B."/>
            <person name="Shatkay H."/>
            <person name="Dew I."/>
            <person name="Miller J.R."/>
            <person name="Flanigan M.J."/>
            <person name="Edwards N.J."/>
            <person name="Bolanos R."/>
            <person name="Fasulo D."/>
            <person name="Halldorsson B.V."/>
            <person name="Hannenhalli S."/>
            <person name="Turner R."/>
            <person name="Yooseph S."/>
            <person name="Lu F."/>
            <person name="Nusskern D.R."/>
            <person name="Shue B.C."/>
            <person name="Zheng X.H."/>
            <person name="Zhong F."/>
            <person name="Delcher A.L."/>
            <person name="Huson D.H."/>
            <person name="Kravitz S.A."/>
            <person name="Mouchard L."/>
            <person name="Reinert K."/>
            <person name="Remington K.A."/>
            <person name="Clark A.G."/>
            <person name="Waterman M.S."/>
            <person name="Eichler E.E."/>
            <person name="Adams M.D."/>
            <person name="Hunkapiller M.W."/>
            <person name="Myers E.W."/>
            <person name="Venter J.C."/>
        </authorList>
    </citation>
    <scope>NUCLEOTIDE SEQUENCE [LARGE SCALE GENOMIC DNA]</scope>
</reference>
<reference key="4">
    <citation type="journal article" date="2004" name="Genome Res.">
        <title>The status, quality, and expansion of the NIH full-length cDNA project: the Mammalian Gene Collection (MGC).</title>
        <authorList>
            <consortium name="The MGC Project Team"/>
        </authorList>
    </citation>
    <scope>NUCLEOTIDE SEQUENCE [LARGE SCALE MRNA] (ISOFORM 1)</scope>
    <source>
        <tissue>Bone marrow</tissue>
        <tissue>Leiomyosarcoma</tissue>
        <tissue>Rhabdomyosarcoma</tissue>
        <tissue>Testis carcinoma</tissue>
    </source>
</reference>
<reference key="5">
    <citation type="journal article" date="2006" name="Dev. Cell">
        <title>Mitotic activation of the kinase Aurora-A requires its binding partner Bora.</title>
        <authorList>
            <person name="Hutterer A."/>
            <person name="Berdnik D."/>
            <person name="Wirtz-Peitz F."/>
            <person name="Zigman M."/>
            <person name="Schleiffer A."/>
            <person name="Knoblich J.A."/>
        </authorList>
    </citation>
    <scope>FUNCTION</scope>
    <scope>PHOSPHORYLATION</scope>
    <scope>INTERACTION WITH AURKA</scope>
</reference>
<reference key="6">
    <citation type="journal article" date="2008" name="Proc. Natl. Acad. Sci. U.S.A.">
        <title>A quantitative atlas of mitotic phosphorylation.</title>
        <authorList>
            <person name="Dephoure N."/>
            <person name="Zhou C."/>
            <person name="Villen J."/>
            <person name="Beausoleil S.A."/>
            <person name="Bakalarski C.E."/>
            <person name="Elledge S.J."/>
            <person name="Gygi S.P."/>
        </authorList>
    </citation>
    <scope>PHOSPHORYLATION [LARGE SCALE ANALYSIS] AT SER-183</scope>
    <scope>IDENTIFICATION BY MASS SPECTROMETRY [LARGE SCALE ANALYSIS]</scope>
    <source>
        <tissue>Cervix carcinoma</tissue>
    </source>
</reference>
<reference key="7">
    <citation type="journal article" date="2009" name="Anal. Chem.">
        <title>Lys-N and trypsin cover complementary parts of the phosphoproteome in a refined SCX-based approach.</title>
        <authorList>
            <person name="Gauci S."/>
            <person name="Helbig A.O."/>
            <person name="Slijper M."/>
            <person name="Krijgsveld J."/>
            <person name="Heck A.J."/>
            <person name="Mohammed S."/>
        </authorList>
    </citation>
    <scope>IDENTIFICATION BY MASS SPECTROMETRY [LARGE SCALE ANALYSIS]</scope>
</reference>
<reference key="8">
    <citation type="journal article" date="2009" name="Mol. Cell. Proteomics">
        <title>Large-scale proteomics analysis of the human kinome.</title>
        <authorList>
            <person name="Oppermann F.S."/>
            <person name="Gnad F."/>
            <person name="Olsen J.V."/>
            <person name="Hornberger R."/>
            <person name="Greff Z."/>
            <person name="Keri G."/>
            <person name="Mann M."/>
            <person name="Daub H."/>
        </authorList>
    </citation>
    <scope>IDENTIFICATION BY MASS SPECTROMETRY [LARGE SCALE ANALYSIS]</scope>
</reference>
<reference key="9">
    <citation type="journal article" date="2009" name="Sci. Signal.">
        <title>Quantitative phosphoproteomic analysis of T cell receptor signaling reveals system-wide modulation of protein-protein interactions.</title>
        <authorList>
            <person name="Mayya V."/>
            <person name="Lundgren D.H."/>
            <person name="Hwang S.-I."/>
            <person name="Rezaul K."/>
            <person name="Wu L."/>
            <person name="Eng J.K."/>
            <person name="Rodionov V."/>
            <person name="Han D.K."/>
        </authorList>
    </citation>
    <scope>PHOSPHORYLATION [LARGE SCALE ANALYSIS] AT SER-270</scope>
    <scope>IDENTIFICATION BY MASS SPECTROMETRY [LARGE SCALE ANALYSIS]</scope>
    <source>
        <tissue>Leukemic T-cell</tissue>
    </source>
</reference>
<reference key="10">
    <citation type="journal article" date="2013" name="J. Proteome Res.">
        <title>Toward a comprehensive characterization of a human cancer cell phosphoproteome.</title>
        <authorList>
            <person name="Zhou H."/>
            <person name="Di Palma S."/>
            <person name="Preisinger C."/>
            <person name="Peng M."/>
            <person name="Polat A.N."/>
            <person name="Heck A.J."/>
            <person name="Mohammed S."/>
        </authorList>
    </citation>
    <scope>PHOSPHORYLATION [LARGE SCALE ANALYSIS] AT SER-191</scope>
    <scope>IDENTIFICATION BY MASS SPECTROMETRY [LARGE SCALE ANALYSIS]</scope>
    <source>
        <tissue>Erythroleukemia</tissue>
    </source>
</reference>
<sequence>MGDVKESKMQITPETPGRIPVLNPFESPSDYSNLHEQTLASPSVFKSTKLPTPGKFRWSIDQLAVINPVEIDPEDIHRQALYLSHSRIDKDVEDKRQKAIEEFFTKDVIVPSPWTDHEGKQLSQCHSSKCTNINSDSPVGKKLTIHSEKSDAACQTLLSLPVDFNLENILGDYFRADEFADQSPGNLSSSSLRRKLFLDGNGSISDSLPSASPGSPHSGVQTSLEMFYSIDLSPVKCRSPLQTPSSGQFSSSPIQASAKKYSLGSITSPSPISSPTFSPIEFQIGETPLSEQRKFTVHSPDASSGTNSNGITNPCIRSPYIDGCSPIKNWSPMRLQMYSGGTQYRTSVIQIPFTLETQGEDEEDKENIPSTDVSSPAMDAAGIHLRQFSNEASTHGTHLVVTAMSVTQNQSSASEKELALLQDVEREKDNNTVDMVDPIEIADETTWIKEPVDNGSLPMTDFVSGIAFSIENSHMCMSPLAESSVIPCESSNIQMDSGYNTQNCGSNIMDTVGAESYCKESDAQTCEVESKSQAFNMKQDHTTQRCWMKTASPFQCSSP</sequence>
<proteinExistence type="evidence at protein level"/>
<feature type="chain" id="PRO_0000273205" description="Protein aurora borealis">
    <location>
        <begin position="1"/>
        <end position="559"/>
    </location>
</feature>
<feature type="region of interest" description="Disordered" evidence="2">
    <location>
        <begin position="1"/>
        <end position="27"/>
    </location>
</feature>
<feature type="modified residue" description="Phosphoserine" evidence="6">
    <location>
        <position position="183"/>
    </location>
</feature>
<feature type="modified residue" description="Phosphoserine" evidence="8">
    <location>
        <position position="191"/>
    </location>
</feature>
<feature type="modified residue" description="Phosphoserine" evidence="7">
    <location>
        <position position="270"/>
    </location>
</feature>
<feature type="modified residue" description="Phosphoserine" evidence="1">
    <location>
        <position position="325"/>
    </location>
</feature>
<feature type="modified residue" description="Phosphoserine" evidence="1">
    <location>
        <position position="331"/>
    </location>
</feature>
<feature type="modified residue" description="Phosphothreonine" evidence="1">
    <location>
        <position position="354"/>
    </location>
</feature>
<feature type="splice variant" id="VSP_055543" description="In isoform 2." evidence="4">
    <original>MGDVKESKMQITPETPGRIPVLNPFESPSDYSNLHEQTLASPSVFKSTKLPTPGKFRWSIDQLAVINPVEIDPEDIHRQALYLSHSR</original>
    <variation>MNKLSPVLLFLNQQNYQ</variation>
    <location>
        <begin position="1"/>
        <end position="87"/>
    </location>
</feature>
<feature type="sequence variant" id="VAR_030110" description="In dbSNP:rs9543107.">
    <original>S</original>
    <variation>L</variation>
    <location>
        <position position="210"/>
    </location>
</feature>
<feature type="sequence variant" id="VAR_030111" description="In dbSNP:rs1146858.">
    <original>S</original>
    <variation>F</variation>
    <location>
        <position position="308"/>
    </location>
</feature>
<feature type="sequence conflict" description="In Ref. 4; AAH07119." evidence="5" ref="4">
    <original>R</original>
    <variation>K</variation>
    <location>
        <position position="545"/>
    </location>
</feature>
<accession>Q6PGQ7</accession>
<accession>B4DQ30</accession>
<accession>Q5W0P3</accession>
<accession>Q5W0P4</accession>
<accession>Q86YC6</accession>
<accession>Q96IW9</accession>
<accession>Q9H640</accession>
<keyword id="KW-0025">Alternative splicing</keyword>
<keyword id="KW-0131">Cell cycle</keyword>
<keyword id="KW-0132">Cell division</keyword>
<keyword id="KW-0498">Mitosis</keyword>
<keyword id="KW-0597">Phosphoprotein</keyword>
<keyword id="KW-1267">Proteomics identification</keyword>
<keyword id="KW-1185">Reference proteome</keyword>
<dbReference type="EMBL" id="AK026277">
    <property type="protein sequence ID" value="BAB15426.1"/>
    <property type="status" value="ALT_INIT"/>
    <property type="molecule type" value="mRNA"/>
</dbReference>
<dbReference type="EMBL" id="AK298608">
    <property type="protein sequence ID" value="BAG60792.1"/>
    <property type="molecule type" value="mRNA"/>
</dbReference>
<dbReference type="EMBL" id="AL138695">
    <property type="status" value="NOT_ANNOTATED_CDS"/>
    <property type="molecule type" value="Genomic_DNA"/>
</dbReference>
<dbReference type="EMBL" id="CH471093">
    <property type="protein sequence ID" value="EAW80515.1"/>
    <property type="molecule type" value="Genomic_DNA"/>
</dbReference>
<dbReference type="EMBL" id="BC007119">
    <property type="protein sequence ID" value="AAH07119.1"/>
    <property type="molecule type" value="mRNA"/>
</dbReference>
<dbReference type="EMBL" id="BC025367">
    <property type="protein sequence ID" value="AAH25367.2"/>
    <property type="molecule type" value="mRNA"/>
</dbReference>
<dbReference type="EMBL" id="BC044213">
    <property type="protein sequence ID" value="AAH44213.1"/>
    <property type="molecule type" value="mRNA"/>
</dbReference>
<dbReference type="EMBL" id="BC056876">
    <property type="protein sequence ID" value="AAH56876.2"/>
    <property type="molecule type" value="mRNA"/>
</dbReference>
<dbReference type="CCDS" id="CCDS66560.1">
    <molecule id="Q6PGQ7-2"/>
</dbReference>
<dbReference type="CCDS" id="CCDS9446.3">
    <molecule id="Q6PGQ7-1"/>
</dbReference>
<dbReference type="RefSeq" id="NP_001273675.2">
    <molecule id="Q6PGQ7-1"/>
    <property type="nucleotide sequence ID" value="NM_001286746.3"/>
</dbReference>
<dbReference type="RefSeq" id="NP_001273676.1">
    <molecule id="Q6PGQ7-2"/>
    <property type="nucleotide sequence ID" value="NM_001286747.2"/>
</dbReference>
<dbReference type="RefSeq" id="NP_079084.3">
    <molecule id="Q6PGQ7-1"/>
    <property type="nucleotide sequence ID" value="NM_024808.3"/>
</dbReference>
<dbReference type="BioGRID" id="122954">
    <property type="interactions" value="50"/>
</dbReference>
<dbReference type="DIP" id="DIP-53424N"/>
<dbReference type="ELM" id="Q6PGQ7"/>
<dbReference type="FunCoup" id="Q6PGQ7">
    <property type="interactions" value="2873"/>
</dbReference>
<dbReference type="IntAct" id="Q6PGQ7">
    <property type="interactions" value="44"/>
</dbReference>
<dbReference type="STRING" id="9606.ENSP00000479266"/>
<dbReference type="GlyGen" id="Q6PGQ7">
    <property type="glycosylation" value="1 site, 1 O-linked glycan (1 site)"/>
</dbReference>
<dbReference type="iPTMnet" id="Q6PGQ7"/>
<dbReference type="PhosphoSitePlus" id="Q6PGQ7"/>
<dbReference type="BioMuta" id="BORA"/>
<dbReference type="DMDM" id="74737659"/>
<dbReference type="jPOST" id="Q6PGQ7"/>
<dbReference type="MassIVE" id="Q6PGQ7"/>
<dbReference type="PaxDb" id="9606-ENSP00000479266"/>
<dbReference type="PeptideAtlas" id="Q6PGQ7"/>
<dbReference type="ProteomicsDB" id="67120">
    <molecule id="Q6PGQ7-1"/>
</dbReference>
<dbReference type="Antibodypedia" id="24385">
    <property type="antibodies" value="185 antibodies from 33 providers"/>
</dbReference>
<dbReference type="DNASU" id="79866"/>
<dbReference type="Ensembl" id="ENST00000390667.11">
    <molecule id="Q6PGQ7-1"/>
    <property type="protein sequence ID" value="ENSP00000375082.6"/>
    <property type="gene ID" value="ENSG00000136122.18"/>
</dbReference>
<dbReference type="Ensembl" id="ENST00000651477.1">
    <molecule id="Q6PGQ7-1"/>
    <property type="protein sequence ID" value="ENSP00000498664.1"/>
    <property type="gene ID" value="ENSG00000136122.18"/>
</dbReference>
<dbReference type="Ensembl" id="ENST00000652266.1">
    <molecule id="Q6PGQ7-2"/>
    <property type="protein sequence ID" value="ENSP00000498882.1"/>
    <property type="gene ID" value="ENSG00000136122.18"/>
</dbReference>
<dbReference type="GeneID" id="79866"/>
<dbReference type="KEGG" id="hsa:79866"/>
<dbReference type="MANE-Select" id="ENST00000390667.11">
    <property type="protein sequence ID" value="ENSP00000375082.6"/>
    <property type="RefSeq nucleotide sequence ID" value="NM_024808.5"/>
    <property type="RefSeq protein sequence ID" value="NP_079084.4"/>
</dbReference>
<dbReference type="UCSC" id="uc010thr.3">
    <molecule id="Q6PGQ7-1"/>
    <property type="organism name" value="human"/>
</dbReference>
<dbReference type="AGR" id="HGNC:24724"/>
<dbReference type="CTD" id="79866"/>
<dbReference type="DisGeNET" id="79866"/>
<dbReference type="GeneCards" id="BORA"/>
<dbReference type="HGNC" id="HGNC:24724">
    <property type="gene designation" value="BORA"/>
</dbReference>
<dbReference type="HPA" id="ENSG00000136122">
    <property type="expression patterns" value="Low tissue specificity"/>
</dbReference>
<dbReference type="MIM" id="610510">
    <property type="type" value="gene"/>
</dbReference>
<dbReference type="neXtProt" id="NX_Q6PGQ7"/>
<dbReference type="OpenTargets" id="ENSG00000136122"/>
<dbReference type="PharmGKB" id="PA162378045"/>
<dbReference type="VEuPathDB" id="HostDB:ENSG00000136122"/>
<dbReference type="eggNOG" id="ENOG502S85H">
    <property type="taxonomic scope" value="Eukaryota"/>
</dbReference>
<dbReference type="GeneTree" id="ENSGT00390000013790"/>
<dbReference type="InParanoid" id="Q6PGQ7"/>
<dbReference type="OMA" id="STWIKEP"/>
<dbReference type="OrthoDB" id="10020858at2759"/>
<dbReference type="PAN-GO" id="Q6PGQ7">
    <property type="GO annotations" value="6 GO annotations based on evolutionary models"/>
</dbReference>
<dbReference type="PhylomeDB" id="Q6PGQ7"/>
<dbReference type="TreeFam" id="TF329674"/>
<dbReference type="PathwayCommons" id="Q6PGQ7"/>
<dbReference type="Reactome" id="R-HSA-2565942">
    <property type="pathway name" value="Regulation of PLK1 Activity at G2/M Transition"/>
</dbReference>
<dbReference type="SignaLink" id="Q6PGQ7"/>
<dbReference type="SIGNOR" id="Q6PGQ7"/>
<dbReference type="BioGRID-ORCS" id="79866">
    <property type="hits" value="583 hits in 1165 CRISPR screens"/>
</dbReference>
<dbReference type="ChiTaRS" id="BORA">
    <property type="organism name" value="human"/>
</dbReference>
<dbReference type="GenomeRNAi" id="79866"/>
<dbReference type="Pharos" id="Q6PGQ7">
    <property type="development level" value="Tbio"/>
</dbReference>
<dbReference type="PRO" id="PR:Q6PGQ7"/>
<dbReference type="Proteomes" id="UP000005640">
    <property type="component" value="Chromosome 13"/>
</dbReference>
<dbReference type="RNAct" id="Q6PGQ7">
    <property type="molecule type" value="protein"/>
</dbReference>
<dbReference type="Bgee" id="ENSG00000136122">
    <property type="expression patterns" value="Expressed in secondary oocyte and 131 other cell types or tissues"/>
</dbReference>
<dbReference type="ExpressionAtlas" id="Q6PGQ7">
    <property type="expression patterns" value="baseline and differential"/>
</dbReference>
<dbReference type="GO" id="GO:0005737">
    <property type="term" value="C:cytoplasm"/>
    <property type="evidence" value="ECO:0000318"/>
    <property type="project" value="GO_Central"/>
</dbReference>
<dbReference type="GO" id="GO:0005829">
    <property type="term" value="C:cytosol"/>
    <property type="evidence" value="ECO:0000304"/>
    <property type="project" value="Reactome"/>
</dbReference>
<dbReference type="GO" id="GO:0072687">
    <property type="term" value="C:meiotic spindle"/>
    <property type="evidence" value="ECO:0007669"/>
    <property type="project" value="Ensembl"/>
</dbReference>
<dbReference type="GO" id="GO:0005634">
    <property type="term" value="C:nucleus"/>
    <property type="evidence" value="ECO:0000318"/>
    <property type="project" value="GO_Central"/>
</dbReference>
<dbReference type="GO" id="GO:0019901">
    <property type="term" value="F:protein kinase binding"/>
    <property type="evidence" value="ECO:0000353"/>
    <property type="project" value="UniProtKB"/>
</dbReference>
<dbReference type="GO" id="GO:0051301">
    <property type="term" value="P:cell division"/>
    <property type="evidence" value="ECO:0007669"/>
    <property type="project" value="UniProtKB-KW"/>
</dbReference>
<dbReference type="GO" id="GO:0007088">
    <property type="term" value="P:regulation of mitotic nuclear division"/>
    <property type="evidence" value="ECO:0000315"/>
    <property type="project" value="UniProtKB"/>
</dbReference>
<dbReference type="GO" id="GO:0060236">
    <property type="term" value="P:regulation of mitotic spindle organization"/>
    <property type="evidence" value="ECO:0000315"/>
    <property type="project" value="UniProtKB"/>
</dbReference>
<dbReference type="GO" id="GO:0032880">
    <property type="term" value="P:regulation of protein localization"/>
    <property type="evidence" value="ECO:0000315"/>
    <property type="project" value="UniProtKB"/>
</dbReference>
<dbReference type="InterPro" id="IPR023252">
    <property type="entry name" value="Aurora_borealis_protein"/>
</dbReference>
<dbReference type="PANTHER" id="PTHR14728">
    <property type="entry name" value="PROTEIN AURORA BOREALIS"/>
    <property type="match status" value="1"/>
</dbReference>
<dbReference type="PANTHER" id="PTHR14728:SF2">
    <property type="entry name" value="PROTEIN AURORA BOREALIS"/>
    <property type="match status" value="1"/>
</dbReference>
<dbReference type="Pfam" id="PF15280">
    <property type="entry name" value="BORA_N"/>
    <property type="match status" value="1"/>
</dbReference>
<dbReference type="PRINTS" id="PR02038">
    <property type="entry name" value="AURORABORA"/>
</dbReference>
<evidence type="ECO:0000250" key="1">
    <source>
        <dbReference type="UniProtKB" id="Q8BS90"/>
    </source>
</evidence>
<evidence type="ECO:0000256" key="2">
    <source>
        <dbReference type="SAM" id="MobiDB-lite"/>
    </source>
</evidence>
<evidence type="ECO:0000269" key="3">
    <source>
    </source>
</evidence>
<evidence type="ECO:0000303" key="4">
    <source>
    </source>
</evidence>
<evidence type="ECO:0000305" key="5"/>
<evidence type="ECO:0007744" key="6">
    <source>
    </source>
</evidence>
<evidence type="ECO:0007744" key="7">
    <source>
    </source>
</evidence>
<evidence type="ECO:0007744" key="8">
    <source>
    </source>
</evidence>